<keyword id="KW-0119">Carbohydrate metabolism</keyword>
<keyword id="KW-0456">Lyase</keyword>
<keyword id="KW-1185">Reference proteome</keyword>
<organism>
    <name type="scientific">Pectobacterium atrosepticum (strain SCRI 1043 / ATCC BAA-672)</name>
    <name type="common">Erwinia carotovora subsp. atroseptica</name>
    <dbReference type="NCBI Taxonomy" id="218491"/>
    <lineage>
        <taxon>Bacteria</taxon>
        <taxon>Pseudomonadati</taxon>
        <taxon>Pseudomonadota</taxon>
        <taxon>Gammaproteobacteria</taxon>
        <taxon>Enterobacterales</taxon>
        <taxon>Pectobacteriaceae</taxon>
        <taxon>Pectobacterium</taxon>
    </lineage>
</organism>
<gene>
    <name evidence="1" type="primary">murQ</name>
    <name type="ordered locus">ECA3262</name>
</gene>
<sequence length="303" mass="31513">MNGENLNLGTLVSETRNPATMTLDQLSTLEMMQVFNQEDRKVPEAIAQVLPAIAEAVDLATASLQAGGRLIYLGAGTSGRLGVLDASECPPTFGVPHGLVIGLIAGGPGALLKAVEGAEDDPALGEADLKALSLTATDMVIGLAASGRTPYVIGALRYARDVGCRTAAISCNPHSPIAQEAQVAISPVVGPEALTGSTRLKSGTAQKLVLNMISTGVMVKLGKVYQNLMVDVKATNVKLLDRACRIVVEATGADLDSARQALEQSDNDVKPAILMLLANIGVEAARERLKQHNGYLREALLGG</sequence>
<comment type="function">
    <text evidence="1">Specifically catalyzes the cleavage of the D-lactyl ether substituent of MurNAc 6-phosphate, producing GlcNAc 6-phosphate and D-lactate. Together with AnmK, is also required for the utilization of anhydro-N-acetylmuramic acid (anhMurNAc) either imported from the medium or derived from its own cell wall murein, and thus plays a role in cell wall recycling.</text>
</comment>
<comment type="catalytic activity">
    <reaction evidence="1">
        <text>N-acetyl-D-muramate 6-phosphate + H2O = N-acetyl-D-glucosamine 6-phosphate + (R)-lactate</text>
        <dbReference type="Rhea" id="RHEA:26410"/>
        <dbReference type="ChEBI" id="CHEBI:15377"/>
        <dbReference type="ChEBI" id="CHEBI:16004"/>
        <dbReference type="ChEBI" id="CHEBI:57513"/>
        <dbReference type="ChEBI" id="CHEBI:58722"/>
        <dbReference type="EC" id="4.2.1.126"/>
    </reaction>
</comment>
<comment type="pathway">
    <text evidence="1">Amino-sugar metabolism; 1,6-anhydro-N-acetylmuramate degradation.</text>
</comment>
<comment type="pathway">
    <text evidence="1">Amino-sugar metabolism; N-acetylmuramate degradation.</text>
</comment>
<comment type="pathway">
    <text evidence="1">Cell wall biogenesis; peptidoglycan recycling.</text>
</comment>
<comment type="subunit">
    <text evidence="1">Homodimer.</text>
</comment>
<comment type="induction">
    <text evidence="1">Induced by MurNAc 6-phosphate that releases the repressor MurR from the DNA. Repressed by MurR in the absence of MurNAc 6-phosphate.</text>
</comment>
<comment type="miscellaneous">
    <text evidence="1">A lyase-type mechanism (elimination/hydration) is suggested for the cleavage of the lactyl ether bond of MurNAc 6-phosphate, with the formation of an alpha,beta-unsaturated aldehyde intermediate with (E)-stereochemistry, followed by the syn addition of water to give product.</text>
</comment>
<comment type="similarity">
    <text evidence="1">Belongs to the GCKR-like family. MurNAc-6-P etherase subfamily.</text>
</comment>
<comment type="sequence caution" evidence="2">
    <conflict type="erroneous initiation">
        <sequence resource="EMBL-CDS" id="CAG76160"/>
    </conflict>
</comment>
<name>MURQ_PECAS</name>
<dbReference type="EC" id="4.2.1.126" evidence="1"/>
<dbReference type="EMBL" id="BX950851">
    <property type="protein sequence ID" value="CAG76160.1"/>
    <property type="status" value="ALT_INIT"/>
    <property type="molecule type" value="Genomic_DNA"/>
</dbReference>
<dbReference type="SMR" id="Q6D234"/>
<dbReference type="STRING" id="218491.ECA3262"/>
<dbReference type="KEGG" id="eca:ECA3262"/>
<dbReference type="eggNOG" id="COG2103">
    <property type="taxonomic scope" value="Bacteria"/>
</dbReference>
<dbReference type="HOGENOM" id="CLU_049049_1_1_6"/>
<dbReference type="UniPathway" id="UPA00342"/>
<dbReference type="UniPathway" id="UPA00343"/>
<dbReference type="UniPathway" id="UPA00544"/>
<dbReference type="Proteomes" id="UP000007966">
    <property type="component" value="Chromosome"/>
</dbReference>
<dbReference type="GO" id="GO:0097367">
    <property type="term" value="F:carbohydrate derivative binding"/>
    <property type="evidence" value="ECO:0007669"/>
    <property type="project" value="InterPro"/>
</dbReference>
<dbReference type="GO" id="GO:0016835">
    <property type="term" value="F:carbon-oxygen lyase activity"/>
    <property type="evidence" value="ECO:0007669"/>
    <property type="project" value="UniProtKB-UniRule"/>
</dbReference>
<dbReference type="GO" id="GO:0016803">
    <property type="term" value="F:ether hydrolase activity"/>
    <property type="evidence" value="ECO:0007669"/>
    <property type="project" value="TreeGrafter"/>
</dbReference>
<dbReference type="GO" id="GO:0097175">
    <property type="term" value="P:1,6-anhydro-N-acetyl-beta-muramic acid catabolic process"/>
    <property type="evidence" value="ECO:0007669"/>
    <property type="project" value="UniProtKB-UniRule"/>
</dbReference>
<dbReference type="GO" id="GO:0046348">
    <property type="term" value="P:amino sugar catabolic process"/>
    <property type="evidence" value="ECO:0007669"/>
    <property type="project" value="InterPro"/>
</dbReference>
<dbReference type="GO" id="GO:0097173">
    <property type="term" value="P:N-acetylmuramic acid catabolic process"/>
    <property type="evidence" value="ECO:0007669"/>
    <property type="project" value="UniProtKB-UniPathway"/>
</dbReference>
<dbReference type="GO" id="GO:0009254">
    <property type="term" value="P:peptidoglycan turnover"/>
    <property type="evidence" value="ECO:0007669"/>
    <property type="project" value="UniProtKB-UniRule"/>
</dbReference>
<dbReference type="CDD" id="cd05007">
    <property type="entry name" value="SIS_Etherase"/>
    <property type="match status" value="1"/>
</dbReference>
<dbReference type="FunFam" id="1.10.8.1080:FF:000001">
    <property type="entry name" value="N-acetylmuramic acid 6-phosphate etherase"/>
    <property type="match status" value="1"/>
</dbReference>
<dbReference type="FunFam" id="3.40.50.10490:FF:000014">
    <property type="entry name" value="N-acetylmuramic acid 6-phosphate etherase"/>
    <property type="match status" value="1"/>
</dbReference>
<dbReference type="Gene3D" id="1.10.8.1080">
    <property type="match status" value="1"/>
</dbReference>
<dbReference type="Gene3D" id="3.40.50.10490">
    <property type="entry name" value="Glucose-6-phosphate isomerase like protein, domain 1"/>
    <property type="match status" value="1"/>
</dbReference>
<dbReference type="HAMAP" id="MF_00068">
    <property type="entry name" value="MurQ"/>
    <property type="match status" value="1"/>
</dbReference>
<dbReference type="InterPro" id="IPR005488">
    <property type="entry name" value="Etherase_MurQ"/>
</dbReference>
<dbReference type="InterPro" id="IPR005486">
    <property type="entry name" value="Glucokinase_regulatory_CS"/>
</dbReference>
<dbReference type="InterPro" id="IPR040190">
    <property type="entry name" value="MURQ/GCKR"/>
</dbReference>
<dbReference type="InterPro" id="IPR001347">
    <property type="entry name" value="SIS_dom"/>
</dbReference>
<dbReference type="InterPro" id="IPR046348">
    <property type="entry name" value="SIS_dom_sf"/>
</dbReference>
<dbReference type="NCBIfam" id="TIGR00274">
    <property type="entry name" value="N-acetylmuramic acid 6-phosphate etherase"/>
    <property type="match status" value="1"/>
</dbReference>
<dbReference type="NCBIfam" id="NF003915">
    <property type="entry name" value="PRK05441.1"/>
    <property type="match status" value="1"/>
</dbReference>
<dbReference type="NCBIfam" id="NF009222">
    <property type="entry name" value="PRK12570.1"/>
    <property type="match status" value="1"/>
</dbReference>
<dbReference type="PANTHER" id="PTHR10088">
    <property type="entry name" value="GLUCOKINASE REGULATORY PROTEIN"/>
    <property type="match status" value="1"/>
</dbReference>
<dbReference type="PANTHER" id="PTHR10088:SF5">
    <property type="entry name" value="N-ACETYLMURAMIC ACID 6-PHOSPHATE ETHERASE"/>
    <property type="match status" value="1"/>
</dbReference>
<dbReference type="Pfam" id="PF22645">
    <property type="entry name" value="GKRP_SIS_N"/>
    <property type="match status" value="1"/>
</dbReference>
<dbReference type="SUPFAM" id="SSF53697">
    <property type="entry name" value="SIS domain"/>
    <property type="match status" value="1"/>
</dbReference>
<dbReference type="PROSITE" id="PS01272">
    <property type="entry name" value="GCKR"/>
    <property type="match status" value="1"/>
</dbReference>
<dbReference type="PROSITE" id="PS51464">
    <property type="entry name" value="SIS"/>
    <property type="match status" value="1"/>
</dbReference>
<feature type="chain" id="PRO_0000249623" description="N-acetylmuramic acid 6-phosphate etherase">
    <location>
        <begin position="1"/>
        <end position="303"/>
    </location>
</feature>
<feature type="domain" description="SIS" evidence="1">
    <location>
        <begin position="60"/>
        <end position="223"/>
    </location>
</feature>
<feature type="active site" description="Proton donor" evidence="1">
    <location>
        <position position="88"/>
    </location>
</feature>
<feature type="active site" evidence="1">
    <location>
        <position position="119"/>
    </location>
</feature>
<proteinExistence type="inferred from homology"/>
<accession>Q6D234</accession>
<protein>
    <recommendedName>
        <fullName evidence="1">N-acetylmuramic acid 6-phosphate etherase</fullName>
        <shortName evidence="1">MurNAc-6-P etherase</shortName>
        <ecNumber evidence="1">4.2.1.126</ecNumber>
    </recommendedName>
    <alternativeName>
        <fullName evidence="1">N-acetylmuramic acid 6-phosphate hydrolase</fullName>
    </alternativeName>
    <alternativeName>
        <fullName evidence="1">N-acetylmuramic acid 6-phosphate lyase</fullName>
    </alternativeName>
</protein>
<evidence type="ECO:0000255" key="1">
    <source>
        <dbReference type="HAMAP-Rule" id="MF_00068"/>
    </source>
</evidence>
<evidence type="ECO:0000305" key="2"/>
<reference key="1">
    <citation type="journal article" date="2004" name="Proc. Natl. Acad. Sci. U.S.A.">
        <title>Genome sequence of the enterobacterial phytopathogen Erwinia carotovora subsp. atroseptica and characterization of virulence factors.</title>
        <authorList>
            <person name="Bell K.S."/>
            <person name="Sebaihia M."/>
            <person name="Pritchard L."/>
            <person name="Holden M.T.G."/>
            <person name="Hyman L.J."/>
            <person name="Holeva M.C."/>
            <person name="Thomson N.R."/>
            <person name="Bentley S.D."/>
            <person name="Churcher L.J.C."/>
            <person name="Mungall K."/>
            <person name="Atkin R."/>
            <person name="Bason N."/>
            <person name="Brooks K."/>
            <person name="Chillingworth T."/>
            <person name="Clark K."/>
            <person name="Doggett J."/>
            <person name="Fraser A."/>
            <person name="Hance Z."/>
            <person name="Hauser H."/>
            <person name="Jagels K."/>
            <person name="Moule S."/>
            <person name="Norbertczak H."/>
            <person name="Ormond D."/>
            <person name="Price C."/>
            <person name="Quail M.A."/>
            <person name="Sanders M."/>
            <person name="Walker D."/>
            <person name="Whitehead S."/>
            <person name="Salmond G.P.C."/>
            <person name="Birch P.R.J."/>
            <person name="Parkhill J."/>
            <person name="Toth I.K."/>
        </authorList>
    </citation>
    <scope>NUCLEOTIDE SEQUENCE [LARGE SCALE GENOMIC DNA]</scope>
    <source>
        <strain>SCRI 1043 / ATCC BAA-672</strain>
    </source>
</reference>